<name>RL6_MAGMM</name>
<proteinExistence type="inferred from homology"/>
<protein>
    <recommendedName>
        <fullName evidence="1">Large ribosomal subunit protein uL6</fullName>
    </recommendedName>
    <alternativeName>
        <fullName evidence="2">50S ribosomal protein L6</fullName>
    </alternativeName>
</protein>
<gene>
    <name evidence="1" type="primary">rplF</name>
    <name type="ordered locus">Mmc1_0862</name>
</gene>
<dbReference type="EMBL" id="CP000471">
    <property type="protein sequence ID" value="ABK43381.1"/>
    <property type="molecule type" value="Genomic_DNA"/>
</dbReference>
<dbReference type="RefSeq" id="WP_011712540.1">
    <property type="nucleotide sequence ID" value="NC_008576.1"/>
</dbReference>
<dbReference type="SMR" id="A0L5Y8"/>
<dbReference type="STRING" id="156889.Mmc1_0862"/>
<dbReference type="KEGG" id="mgm:Mmc1_0862"/>
<dbReference type="eggNOG" id="COG0097">
    <property type="taxonomic scope" value="Bacteria"/>
</dbReference>
<dbReference type="HOGENOM" id="CLU_065464_1_2_5"/>
<dbReference type="OrthoDB" id="9805007at2"/>
<dbReference type="Proteomes" id="UP000002586">
    <property type="component" value="Chromosome"/>
</dbReference>
<dbReference type="GO" id="GO:0022625">
    <property type="term" value="C:cytosolic large ribosomal subunit"/>
    <property type="evidence" value="ECO:0007669"/>
    <property type="project" value="TreeGrafter"/>
</dbReference>
<dbReference type="GO" id="GO:0019843">
    <property type="term" value="F:rRNA binding"/>
    <property type="evidence" value="ECO:0007669"/>
    <property type="project" value="UniProtKB-UniRule"/>
</dbReference>
<dbReference type="GO" id="GO:0003735">
    <property type="term" value="F:structural constituent of ribosome"/>
    <property type="evidence" value="ECO:0007669"/>
    <property type="project" value="InterPro"/>
</dbReference>
<dbReference type="GO" id="GO:0002181">
    <property type="term" value="P:cytoplasmic translation"/>
    <property type="evidence" value="ECO:0007669"/>
    <property type="project" value="TreeGrafter"/>
</dbReference>
<dbReference type="FunFam" id="3.90.930.12:FF:000001">
    <property type="entry name" value="50S ribosomal protein L6"/>
    <property type="match status" value="1"/>
</dbReference>
<dbReference type="FunFam" id="3.90.930.12:FF:000002">
    <property type="entry name" value="50S ribosomal protein L6"/>
    <property type="match status" value="1"/>
</dbReference>
<dbReference type="Gene3D" id="3.90.930.12">
    <property type="entry name" value="Ribosomal protein L6, alpha-beta domain"/>
    <property type="match status" value="2"/>
</dbReference>
<dbReference type="HAMAP" id="MF_01365_B">
    <property type="entry name" value="Ribosomal_uL6_B"/>
    <property type="match status" value="1"/>
</dbReference>
<dbReference type="InterPro" id="IPR000702">
    <property type="entry name" value="Ribosomal_uL6-like"/>
</dbReference>
<dbReference type="InterPro" id="IPR036789">
    <property type="entry name" value="Ribosomal_uL6-like_a/b-dom_sf"/>
</dbReference>
<dbReference type="InterPro" id="IPR020040">
    <property type="entry name" value="Ribosomal_uL6_a/b-dom"/>
</dbReference>
<dbReference type="InterPro" id="IPR019906">
    <property type="entry name" value="Ribosomal_uL6_bac-type"/>
</dbReference>
<dbReference type="InterPro" id="IPR002358">
    <property type="entry name" value="Ribosomal_uL6_CS"/>
</dbReference>
<dbReference type="NCBIfam" id="TIGR03654">
    <property type="entry name" value="L6_bact"/>
    <property type="match status" value="1"/>
</dbReference>
<dbReference type="PANTHER" id="PTHR11655">
    <property type="entry name" value="60S/50S RIBOSOMAL PROTEIN L6/L9"/>
    <property type="match status" value="1"/>
</dbReference>
<dbReference type="PANTHER" id="PTHR11655:SF14">
    <property type="entry name" value="LARGE RIBOSOMAL SUBUNIT PROTEIN UL6M"/>
    <property type="match status" value="1"/>
</dbReference>
<dbReference type="Pfam" id="PF00347">
    <property type="entry name" value="Ribosomal_L6"/>
    <property type="match status" value="2"/>
</dbReference>
<dbReference type="PIRSF" id="PIRSF002162">
    <property type="entry name" value="Ribosomal_L6"/>
    <property type="match status" value="1"/>
</dbReference>
<dbReference type="PRINTS" id="PR00059">
    <property type="entry name" value="RIBOSOMALL6"/>
</dbReference>
<dbReference type="SUPFAM" id="SSF56053">
    <property type="entry name" value="Ribosomal protein L6"/>
    <property type="match status" value="2"/>
</dbReference>
<dbReference type="PROSITE" id="PS00525">
    <property type="entry name" value="RIBOSOMAL_L6_1"/>
    <property type="match status" value="1"/>
</dbReference>
<evidence type="ECO:0000255" key="1">
    <source>
        <dbReference type="HAMAP-Rule" id="MF_01365"/>
    </source>
</evidence>
<evidence type="ECO:0000305" key="2"/>
<keyword id="KW-1185">Reference proteome</keyword>
<keyword id="KW-0687">Ribonucleoprotein</keyword>
<keyword id="KW-0689">Ribosomal protein</keyword>
<keyword id="KW-0694">RNA-binding</keyword>
<keyword id="KW-0699">rRNA-binding</keyword>
<accession>A0L5Y8</accession>
<feature type="chain" id="PRO_1000055255" description="Large ribosomal subunit protein uL6">
    <location>
        <begin position="1"/>
        <end position="177"/>
    </location>
</feature>
<organism>
    <name type="scientific">Magnetococcus marinus (strain ATCC BAA-1437 / JCM 17883 / MC-1)</name>
    <dbReference type="NCBI Taxonomy" id="156889"/>
    <lineage>
        <taxon>Bacteria</taxon>
        <taxon>Pseudomonadati</taxon>
        <taxon>Pseudomonadota</taxon>
        <taxon>Alphaproteobacteria</taxon>
        <taxon>Magnetococcales</taxon>
        <taxon>Magnetococcaceae</taxon>
        <taxon>Magnetococcus</taxon>
    </lineage>
</organism>
<reference key="1">
    <citation type="journal article" date="2009" name="Appl. Environ. Microbiol.">
        <title>Complete genome sequence of the chemolithoautotrophic marine magnetotactic coccus strain MC-1.</title>
        <authorList>
            <person name="Schubbe S."/>
            <person name="Williams T.J."/>
            <person name="Xie G."/>
            <person name="Kiss H.E."/>
            <person name="Brettin T.S."/>
            <person name="Martinez D."/>
            <person name="Ross C.A."/>
            <person name="Schuler D."/>
            <person name="Cox B.L."/>
            <person name="Nealson K.H."/>
            <person name="Bazylinski D.A."/>
        </authorList>
    </citation>
    <scope>NUCLEOTIDE SEQUENCE [LARGE SCALE GENOMIC DNA]</scope>
    <source>
        <strain>ATCC BAA-1437 / JCM 17883 / MC-1</strain>
    </source>
</reference>
<sequence>MSRIGKKPVVVPDGVDLKINGTVVTAKGKLGELTRQFHEAITFAQEGKEVNVAVSGTDKKSSSLWGLSRTLLDNMVVGVSQGFSKQLEIQGVGYRAAVKGRTLELSLGFSHPVNYELPNGLEATVEKNTLITVKGYDKEVLGQACAEIRSWRPPEPYKGKGVRYVGEFVLRKEGKKK</sequence>
<comment type="function">
    <text evidence="1">This protein binds to the 23S rRNA, and is important in its secondary structure. It is located near the subunit interface in the base of the L7/L12 stalk, and near the tRNA binding site of the peptidyltransferase center.</text>
</comment>
<comment type="subunit">
    <text evidence="1">Part of the 50S ribosomal subunit.</text>
</comment>
<comment type="similarity">
    <text evidence="1">Belongs to the universal ribosomal protein uL6 family.</text>
</comment>